<reference key="1">
    <citation type="journal article" date="2000" name="Nucleic Acids Res.">
        <title>Complete genome sequence of the alkaliphilic bacterium Bacillus halodurans and genomic sequence comparison with Bacillus subtilis.</title>
        <authorList>
            <person name="Takami H."/>
            <person name="Nakasone K."/>
            <person name="Takaki Y."/>
            <person name="Maeno G."/>
            <person name="Sasaki R."/>
            <person name="Masui N."/>
            <person name="Fuji F."/>
            <person name="Hirama C."/>
            <person name="Nakamura Y."/>
            <person name="Ogasawara N."/>
            <person name="Kuhara S."/>
            <person name="Horikoshi K."/>
        </authorList>
    </citation>
    <scope>NUCLEOTIDE SEQUENCE [LARGE SCALE GENOMIC DNA]</scope>
    <source>
        <strain>ATCC BAA-125 / DSM 18197 / FERM 7344 / JCM 9153 / C-125</strain>
    </source>
</reference>
<accession>Q9KAD9</accession>
<comment type="subcellular location">
    <subcellularLocation>
        <location evidence="2">Membrane</location>
        <topology evidence="2">Single-pass membrane protein</topology>
    </subcellularLocation>
</comment>
<comment type="similarity">
    <text evidence="2">Belongs to the UPF0154 family.</text>
</comment>
<name>Y2350_HALH5</name>
<sequence>MNWMILLWITLGIVIGIAIGFFIARKTMMSYLKKNPPINEQMLRVMLMQMGQNPSQKKINQMMKAMQKQQSK</sequence>
<gene>
    <name type="ordered locus">BH2350</name>
</gene>
<proteinExistence type="inferred from homology"/>
<dbReference type="EMBL" id="BA000004">
    <property type="protein sequence ID" value="BAB06069.1"/>
    <property type="molecule type" value="Genomic_DNA"/>
</dbReference>
<dbReference type="PIR" id="F83943">
    <property type="entry name" value="F83943"/>
</dbReference>
<dbReference type="RefSeq" id="WP_010898504.1">
    <property type="nucleotide sequence ID" value="NC_002570.2"/>
</dbReference>
<dbReference type="SMR" id="Q9KAD9"/>
<dbReference type="STRING" id="272558.gene:10728248"/>
<dbReference type="GeneID" id="87597872"/>
<dbReference type="KEGG" id="bha:BH2350"/>
<dbReference type="eggNOG" id="COG3763">
    <property type="taxonomic scope" value="Bacteria"/>
</dbReference>
<dbReference type="HOGENOM" id="CLU_180108_0_1_9"/>
<dbReference type="OrthoDB" id="1769076at2"/>
<dbReference type="Proteomes" id="UP000001258">
    <property type="component" value="Chromosome"/>
</dbReference>
<dbReference type="GO" id="GO:0005886">
    <property type="term" value="C:plasma membrane"/>
    <property type="evidence" value="ECO:0007669"/>
    <property type="project" value="UniProtKB-UniRule"/>
</dbReference>
<dbReference type="HAMAP" id="MF_00363">
    <property type="entry name" value="UPF0154"/>
    <property type="match status" value="1"/>
</dbReference>
<dbReference type="InterPro" id="IPR005359">
    <property type="entry name" value="UPF0154"/>
</dbReference>
<dbReference type="Pfam" id="PF03672">
    <property type="entry name" value="UPF0154"/>
    <property type="match status" value="1"/>
</dbReference>
<evidence type="ECO:0000255" key="1"/>
<evidence type="ECO:0000305" key="2"/>
<keyword id="KW-0472">Membrane</keyword>
<keyword id="KW-1185">Reference proteome</keyword>
<keyword id="KW-0812">Transmembrane</keyword>
<keyword id="KW-1133">Transmembrane helix</keyword>
<organism>
    <name type="scientific">Halalkalibacterium halodurans (strain ATCC BAA-125 / DSM 18197 / FERM 7344 / JCM 9153 / C-125)</name>
    <name type="common">Bacillus halodurans</name>
    <dbReference type="NCBI Taxonomy" id="272558"/>
    <lineage>
        <taxon>Bacteria</taxon>
        <taxon>Bacillati</taxon>
        <taxon>Bacillota</taxon>
        <taxon>Bacilli</taxon>
        <taxon>Bacillales</taxon>
        <taxon>Bacillaceae</taxon>
        <taxon>Halalkalibacterium (ex Joshi et al. 2022)</taxon>
    </lineage>
</organism>
<protein>
    <recommendedName>
        <fullName>UPF0154 protein BH2350</fullName>
    </recommendedName>
</protein>
<feature type="chain" id="PRO_0000214959" description="UPF0154 protein BH2350">
    <location>
        <begin position="1"/>
        <end position="72"/>
    </location>
</feature>
<feature type="transmembrane region" description="Helical" evidence="1">
    <location>
        <begin position="3"/>
        <end position="23"/>
    </location>
</feature>